<comment type="function">
    <text evidence="1">Catalyzes the conversion of 3-deoxy-D-arabino-heptulosonate 7-phosphate (DAHP) to dehydroquinate (DHQ).</text>
</comment>
<comment type="catalytic activity">
    <reaction evidence="1">
        <text>7-phospho-2-dehydro-3-deoxy-D-arabino-heptonate = 3-dehydroquinate + phosphate</text>
        <dbReference type="Rhea" id="RHEA:21968"/>
        <dbReference type="ChEBI" id="CHEBI:32364"/>
        <dbReference type="ChEBI" id="CHEBI:43474"/>
        <dbReference type="ChEBI" id="CHEBI:58394"/>
        <dbReference type="EC" id="4.2.3.4"/>
    </reaction>
</comment>
<comment type="cofactor">
    <cofactor evidence="1">
        <name>Co(2+)</name>
        <dbReference type="ChEBI" id="CHEBI:48828"/>
    </cofactor>
    <cofactor evidence="1">
        <name>Zn(2+)</name>
        <dbReference type="ChEBI" id="CHEBI:29105"/>
    </cofactor>
    <text evidence="1">Binds 1 divalent metal cation per subunit. Can use either Co(2+) or Zn(2+).</text>
</comment>
<comment type="cofactor">
    <cofactor evidence="1">
        <name>NAD(+)</name>
        <dbReference type="ChEBI" id="CHEBI:57540"/>
    </cofactor>
</comment>
<comment type="pathway">
    <text evidence="1">Metabolic intermediate biosynthesis; chorismate biosynthesis; chorismate from D-erythrose 4-phosphate and phosphoenolpyruvate: step 2/7.</text>
</comment>
<comment type="subcellular location">
    <subcellularLocation>
        <location evidence="1">Cytoplasm</location>
    </subcellularLocation>
</comment>
<comment type="similarity">
    <text evidence="1">Belongs to the sugar phosphate cyclases superfamily. Dehydroquinate synthase family.</text>
</comment>
<name>AROB_NITSB</name>
<protein>
    <recommendedName>
        <fullName evidence="1">3-dehydroquinate synthase</fullName>
        <shortName evidence="1">DHQS</shortName>
        <ecNumber evidence="1">4.2.3.4</ecNumber>
    </recommendedName>
</protein>
<sequence length="349" mass="39661">MEVFIDLKTCEDRSYSIYIDPIQSIRLSSKTAIVTNPKVAGLHLKYLLNKIEAPELYIITLPDGEDYKNQETLDFLLDRLFDHKLDRKSVLIAFGGGVIGDMTGFAASVFQRGIDFIQIPTTLLSQVDASVGGKTGINNRFGKNLIGAFHQPKAVYIDTHFLQTLPQREFSAGVAEIVKMAVVFDKDFFEWLMKNDLKEEDNLKYAIKRSVELKAAIVAKDEREGGVRASLNYGHTFAHVIENETGYKRFLHGEAVAIGMVMANELAVKTGLLSREDAEKIKNLLQRYNLPVCYEVEDPEDFYEHFFLDKKTQNDTIKFVLPKDIGDFVITDTIKKDQIIDVLREFERC</sequence>
<accession>A6Q3Y3</accession>
<gene>
    <name evidence="1" type="primary">aroB</name>
    <name type="ordered locus">NIS_1083</name>
</gene>
<feature type="chain" id="PRO_1000094555" description="3-dehydroquinate synthase">
    <location>
        <begin position="1"/>
        <end position="349"/>
    </location>
</feature>
<feature type="binding site" evidence="1">
    <location>
        <begin position="63"/>
        <end position="68"/>
    </location>
    <ligand>
        <name>NAD(+)</name>
        <dbReference type="ChEBI" id="CHEBI:57540"/>
    </ligand>
</feature>
<feature type="binding site" evidence="1">
    <location>
        <begin position="97"/>
        <end position="101"/>
    </location>
    <ligand>
        <name>NAD(+)</name>
        <dbReference type="ChEBI" id="CHEBI:57540"/>
    </ligand>
</feature>
<feature type="binding site" evidence="1">
    <location>
        <begin position="121"/>
        <end position="122"/>
    </location>
    <ligand>
        <name>NAD(+)</name>
        <dbReference type="ChEBI" id="CHEBI:57540"/>
    </ligand>
</feature>
<feature type="binding site" evidence="1">
    <location>
        <position position="134"/>
    </location>
    <ligand>
        <name>NAD(+)</name>
        <dbReference type="ChEBI" id="CHEBI:57540"/>
    </ligand>
</feature>
<feature type="binding site" evidence="1">
    <location>
        <position position="143"/>
    </location>
    <ligand>
        <name>NAD(+)</name>
        <dbReference type="ChEBI" id="CHEBI:57540"/>
    </ligand>
</feature>
<feature type="binding site" evidence="1">
    <location>
        <begin position="161"/>
        <end position="164"/>
    </location>
    <ligand>
        <name>NAD(+)</name>
        <dbReference type="ChEBI" id="CHEBI:57540"/>
    </ligand>
</feature>
<feature type="binding site" evidence="1">
    <location>
        <position position="176"/>
    </location>
    <ligand>
        <name>Zn(2+)</name>
        <dbReference type="ChEBI" id="CHEBI:29105"/>
    </ligand>
</feature>
<feature type="binding site" evidence="1">
    <location>
        <position position="235"/>
    </location>
    <ligand>
        <name>Zn(2+)</name>
        <dbReference type="ChEBI" id="CHEBI:29105"/>
    </ligand>
</feature>
<feature type="binding site" evidence="1">
    <location>
        <position position="252"/>
    </location>
    <ligand>
        <name>Zn(2+)</name>
        <dbReference type="ChEBI" id="CHEBI:29105"/>
    </ligand>
</feature>
<evidence type="ECO:0000255" key="1">
    <source>
        <dbReference type="HAMAP-Rule" id="MF_00110"/>
    </source>
</evidence>
<proteinExistence type="inferred from homology"/>
<organism>
    <name type="scientific">Nitratiruptor sp. (strain SB155-2)</name>
    <dbReference type="NCBI Taxonomy" id="387092"/>
    <lineage>
        <taxon>Bacteria</taxon>
        <taxon>Pseudomonadati</taxon>
        <taxon>Campylobacterota</taxon>
        <taxon>Epsilonproteobacteria</taxon>
        <taxon>Nautiliales</taxon>
        <taxon>Nitratiruptoraceae</taxon>
        <taxon>Nitratiruptor</taxon>
    </lineage>
</organism>
<keyword id="KW-0028">Amino-acid biosynthesis</keyword>
<keyword id="KW-0057">Aromatic amino acid biosynthesis</keyword>
<keyword id="KW-0170">Cobalt</keyword>
<keyword id="KW-0963">Cytoplasm</keyword>
<keyword id="KW-0456">Lyase</keyword>
<keyword id="KW-0479">Metal-binding</keyword>
<keyword id="KW-0520">NAD</keyword>
<keyword id="KW-0547">Nucleotide-binding</keyword>
<keyword id="KW-1185">Reference proteome</keyword>
<keyword id="KW-0862">Zinc</keyword>
<reference key="1">
    <citation type="journal article" date="2007" name="Proc. Natl. Acad. Sci. U.S.A.">
        <title>Deep-sea vent epsilon-proteobacterial genomes provide insights into emergence of pathogens.</title>
        <authorList>
            <person name="Nakagawa S."/>
            <person name="Takaki Y."/>
            <person name="Shimamura S."/>
            <person name="Reysenbach A.-L."/>
            <person name="Takai K."/>
            <person name="Horikoshi K."/>
        </authorList>
    </citation>
    <scope>NUCLEOTIDE SEQUENCE [LARGE SCALE GENOMIC DNA]</scope>
    <source>
        <strain>SB155-2</strain>
    </source>
</reference>
<dbReference type="EC" id="4.2.3.4" evidence="1"/>
<dbReference type="EMBL" id="AP009178">
    <property type="protein sequence ID" value="BAF70192.1"/>
    <property type="molecule type" value="Genomic_DNA"/>
</dbReference>
<dbReference type="RefSeq" id="WP_012082455.1">
    <property type="nucleotide sequence ID" value="NC_009662.1"/>
</dbReference>
<dbReference type="SMR" id="A6Q3Y3"/>
<dbReference type="FunCoup" id="A6Q3Y3">
    <property type="interactions" value="471"/>
</dbReference>
<dbReference type="STRING" id="387092.NIS_1083"/>
<dbReference type="KEGG" id="nis:NIS_1083"/>
<dbReference type="eggNOG" id="COG0337">
    <property type="taxonomic scope" value="Bacteria"/>
</dbReference>
<dbReference type="HOGENOM" id="CLU_001201_0_2_7"/>
<dbReference type="InParanoid" id="A6Q3Y3"/>
<dbReference type="OrthoDB" id="9806583at2"/>
<dbReference type="UniPathway" id="UPA00053">
    <property type="reaction ID" value="UER00085"/>
</dbReference>
<dbReference type="Proteomes" id="UP000001118">
    <property type="component" value="Chromosome"/>
</dbReference>
<dbReference type="GO" id="GO:0005737">
    <property type="term" value="C:cytoplasm"/>
    <property type="evidence" value="ECO:0007669"/>
    <property type="project" value="UniProtKB-SubCell"/>
</dbReference>
<dbReference type="GO" id="GO:0003856">
    <property type="term" value="F:3-dehydroquinate synthase activity"/>
    <property type="evidence" value="ECO:0007669"/>
    <property type="project" value="UniProtKB-UniRule"/>
</dbReference>
<dbReference type="GO" id="GO:0046872">
    <property type="term" value="F:metal ion binding"/>
    <property type="evidence" value="ECO:0007669"/>
    <property type="project" value="UniProtKB-KW"/>
</dbReference>
<dbReference type="GO" id="GO:0000166">
    <property type="term" value="F:nucleotide binding"/>
    <property type="evidence" value="ECO:0007669"/>
    <property type="project" value="UniProtKB-KW"/>
</dbReference>
<dbReference type="GO" id="GO:0008652">
    <property type="term" value="P:amino acid biosynthetic process"/>
    <property type="evidence" value="ECO:0007669"/>
    <property type="project" value="UniProtKB-KW"/>
</dbReference>
<dbReference type="GO" id="GO:0009073">
    <property type="term" value="P:aromatic amino acid family biosynthetic process"/>
    <property type="evidence" value="ECO:0007669"/>
    <property type="project" value="UniProtKB-KW"/>
</dbReference>
<dbReference type="GO" id="GO:0009423">
    <property type="term" value="P:chorismate biosynthetic process"/>
    <property type="evidence" value="ECO:0007669"/>
    <property type="project" value="UniProtKB-UniRule"/>
</dbReference>
<dbReference type="CDD" id="cd08195">
    <property type="entry name" value="DHQS"/>
    <property type="match status" value="1"/>
</dbReference>
<dbReference type="FunFam" id="3.40.50.1970:FF:000007">
    <property type="entry name" value="Pentafunctional AROM polypeptide"/>
    <property type="match status" value="1"/>
</dbReference>
<dbReference type="Gene3D" id="3.40.50.1970">
    <property type="match status" value="1"/>
</dbReference>
<dbReference type="Gene3D" id="1.20.1090.10">
    <property type="entry name" value="Dehydroquinate synthase-like - alpha domain"/>
    <property type="match status" value="1"/>
</dbReference>
<dbReference type="HAMAP" id="MF_00110">
    <property type="entry name" value="DHQ_synthase"/>
    <property type="match status" value="1"/>
</dbReference>
<dbReference type="InterPro" id="IPR050071">
    <property type="entry name" value="Dehydroquinate_synthase"/>
</dbReference>
<dbReference type="InterPro" id="IPR016037">
    <property type="entry name" value="DHQ_synth_AroB"/>
</dbReference>
<dbReference type="InterPro" id="IPR030963">
    <property type="entry name" value="DHQ_synth_fam"/>
</dbReference>
<dbReference type="InterPro" id="IPR030960">
    <property type="entry name" value="DHQS/DOIS_N"/>
</dbReference>
<dbReference type="InterPro" id="IPR056179">
    <property type="entry name" value="DHQS_C"/>
</dbReference>
<dbReference type="NCBIfam" id="TIGR01357">
    <property type="entry name" value="aroB"/>
    <property type="match status" value="1"/>
</dbReference>
<dbReference type="PANTHER" id="PTHR43622">
    <property type="entry name" value="3-DEHYDROQUINATE SYNTHASE"/>
    <property type="match status" value="1"/>
</dbReference>
<dbReference type="PANTHER" id="PTHR43622:SF7">
    <property type="entry name" value="3-DEHYDROQUINATE SYNTHASE, CHLOROPLASTIC"/>
    <property type="match status" value="1"/>
</dbReference>
<dbReference type="Pfam" id="PF01761">
    <property type="entry name" value="DHQ_synthase"/>
    <property type="match status" value="1"/>
</dbReference>
<dbReference type="Pfam" id="PF24621">
    <property type="entry name" value="DHQS_C"/>
    <property type="match status" value="1"/>
</dbReference>
<dbReference type="PIRSF" id="PIRSF001455">
    <property type="entry name" value="DHQ_synth"/>
    <property type="match status" value="1"/>
</dbReference>
<dbReference type="SUPFAM" id="SSF56796">
    <property type="entry name" value="Dehydroquinate synthase-like"/>
    <property type="match status" value="1"/>
</dbReference>